<accession>P68646</accession>
<accession>P31576</accession>
<accession>P75627</accession>
<proteinExistence type="evidence at protein level"/>
<protein>
    <recommendedName>
        <fullName>Ferredoxin-like protein FixX</fullName>
    </recommendedName>
</protein>
<evidence type="ECO:0000305" key="1"/>
<sequence>MTSPVNVDVKLGVNKFNVDEEHPHIVVKADADKQALELLVKACPAGLYKKQDDGSVRFDYAGCLECGTCRILGLGSALEQWEYPRGTFGVEFRYG</sequence>
<name>FIXX_ECOLI</name>
<feature type="chain" id="PRO_0000159212" description="Ferredoxin-like protein FixX">
    <location>
        <begin position="1"/>
        <end position="95"/>
    </location>
</feature>
<gene>
    <name type="primary">fixX</name>
    <name type="synonym">yaaT</name>
    <name type="ordered locus">b0044</name>
    <name type="ordered locus">JW0043</name>
</gene>
<dbReference type="EMBL" id="U00096">
    <property type="protein sequence ID" value="AAC73155.1"/>
    <property type="molecule type" value="Genomic_DNA"/>
</dbReference>
<dbReference type="EMBL" id="AP009048">
    <property type="protein sequence ID" value="BAB96612.2"/>
    <property type="molecule type" value="Genomic_DNA"/>
</dbReference>
<dbReference type="PIR" id="D64725">
    <property type="entry name" value="D64725"/>
</dbReference>
<dbReference type="RefSeq" id="NP_414586.1">
    <property type="nucleotide sequence ID" value="NC_000913.3"/>
</dbReference>
<dbReference type="RefSeq" id="WP_000203741.1">
    <property type="nucleotide sequence ID" value="NZ_SSZK01000004.1"/>
</dbReference>
<dbReference type="SMR" id="P68646"/>
<dbReference type="BioGRID" id="4262203">
    <property type="interactions" value="14"/>
</dbReference>
<dbReference type="BioGRID" id="852884">
    <property type="interactions" value="46"/>
</dbReference>
<dbReference type="FunCoup" id="P68646">
    <property type="interactions" value="25"/>
</dbReference>
<dbReference type="IntAct" id="P68646">
    <property type="interactions" value="51"/>
</dbReference>
<dbReference type="STRING" id="511145.b0044"/>
<dbReference type="PaxDb" id="511145-b0044"/>
<dbReference type="EnsemblBacteria" id="AAC73155">
    <property type="protein sequence ID" value="AAC73155"/>
    <property type="gene ID" value="b0044"/>
</dbReference>
<dbReference type="GeneID" id="93777391"/>
<dbReference type="GeneID" id="948590"/>
<dbReference type="KEGG" id="ecj:JW0043"/>
<dbReference type="KEGG" id="eco:b0044"/>
<dbReference type="KEGG" id="ecoc:C3026_00230"/>
<dbReference type="PATRIC" id="fig|1411691.4.peg.2239"/>
<dbReference type="EchoBASE" id="EB1526"/>
<dbReference type="eggNOG" id="COG2440">
    <property type="taxonomic scope" value="Bacteria"/>
</dbReference>
<dbReference type="HOGENOM" id="CLU_163428_1_0_6"/>
<dbReference type="InParanoid" id="P68646"/>
<dbReference type="OMA" id="YGILFKF"/>
<dbReference type="OrthoDB" id="9800260at2"/>
<dbReference type="PhylomeDB" id="P68646"/>
<dbReference type="BioCyc" id="EcoCyc:EG11565-MONOMER"/>
<dbReference type="PRO" id="PR:P68646"/>
<dbReference type="Proteomes" id="UP000000625">
    <property type="component" value="Chromosome"/>
</dbReference>
<dbReference type="GO" id="GO:0051539">
    <property type="term" value="F:4 iron, 4 sulfur cluster binding"/>
    <property type="evidence" value="ECO:0007669"/>
    <property type="project" value="UniProtKB-KW"/>
</dbReference>
<dbReference type="GO" id="GO:0005506">
    <property type="term" value="F:iron ion binding"/>
    <property type="evidence" value="ECO:0007669"/>
    <property type="project" value="InterPro"/>
</dbReference>
<dbReference type="Gene3D" id="3.30.70.20">
    <property type="match status" value="1"/>
</dbReference>
<dbReference type="InterPro" id="IPR012206">
    <property type="entry name" value="Fd_FixX"/>
</dbReference>
<dbReference type="NCBIfam" id="NF011993">
    <property type="entry name" value="PRK15449.1"/>
    <property type="match status" value="1"/>
</dbReference>
<dbReference type="PANTHER" id="PTHR43082">
    <property type="entry name" value="FERREDOXIN-LIKE"/>
    <property type="match status" value="1"/>
</dbReference>
<dbReference type="PANTHER" id="PTHR43082:SF1">
    <property type="entry name" value="FERREDOXIN-LIKE PROTEIN FIXX-RELATED"/>
    <property type="match status" value="1"/>
</dbReference>
<dbReference type="PIRSF" id="PIRSF036548">
    <property type="entry name" value="Fdx_FixX"/>
    <property type="match status" value="1"/>
</dbReference>
<dbReference type="SUPFAM" id="SSF54862">
    <property type="entry name" value="4Fe-4S ferredoxins"/>
    <property type="match status" value="1"/>
</dbReference>
<reference key="1">
    <citation type="journal article" date="1992" name="Nucleic Acids Res.">
        <title>Systematic sequencing of the Escherichia coli genome: analysis of the 0-2.4 min region.</title>
        <authorList>
            <person name="Yura T."/>
            <person name="Mori H."/>
            <person name="Nagai H."/>
            <person name="Nagata T."/>
            <person name="Ishihama A."/>
            <person name="Fujita N."/>
            <person name="Isono K."/>
            <person name="Mizobuchi K."/>
            <person name="Nakata A."/>
        </authorList>
    </citation>
    <scope>NUCLEOTIDE SEQUENCE [LARGE SCALE GENOMIC DNA]</scope>
    <source>
        <strain>K12</strain>
    </source>
</reference>
<reference key="2">
    <citation type="journal article" date="1997" name="Science">
        <title>The complete genome sequence of Escherichia coli K-12.</title>
        <authorList>
            <person name="Blattner F.R."/>
            <person name="Plunkett G. III"/>
            <person name="Bloch C.A."/>
            <person name="Perna N.T."/>
            <person name="Burland V."/>
            <person name="Riley M."/>
            <person name="Collado-Vides J."/>
            <person name="Glasner J.D."/>
            <person name="Rode C.K."/>
            <person name="Mayhew G.F."/>
            <person name="Gregor J."/>
            <person name="Davis N.W."/>
            <person name="Kirkpatrick H.A."/>
            <person name="Goeden M.A."/>
            <person name="Rose D.J."/>
            <person name="Mau B."/>
            <person name="Shao Y."/>
        </authorList>
    </citation>
    <scope>NUCLEOTIDE SEQUENCE [LARGE SCALE GENOMIC DNA]</scope>
    <source>
        <strain>K12 / MG1655 / ATCC 47076</strain>
    </source>
</reference>
<reference key="3">
    <citation type="journal article" date="2006" name="Mol. Syst. Biol.">
        <title>Highly accurate genome sequences of Escherichia coli K-12 strains MG1655 and W3110.</title>
        <authorList>
            <person name="Hayashi K."/>
            <person name="Morooka N."/>
            <person name="Yamamoto Y."/>
            <person name="Fujita K."/>
            <person name="Isono K."/>
            <person name="Choi S."/>
            <person name="Ohtsubo E."/>
            <person name="Baba T."/>
            <person name="Wanner B.L."/>
            <person name="Mori H."/>
            <person name="Horiuchi T."/>
        </authorList>
    </citation>
    <scope>NUCLEOTIDE SEQUENCE [LARGE SCALE GENOMIC DNA]</scope>
    <scope>SEQUENCE REVISION TO 35 AND 95</scope>
    <source>
        <strain>K12 / W3110 / ATCC 27325 / DSM 5911</strain>
    </source>
</reference>
<reference key="4">
    <citation type="journal article" date="1995" name="J. Basic Microbiol.">
        <title>The fix Escherichia coli region contains four genes related to carnitine metabolism.</title>
        <authorList>
            <person name="Eichler K."/>
            <person name="Buchet A."/>
            <person name="Bourgis F."/>
            <person name="Kleber H.-P."/>
            <person name="Mandrand-Berthelot M.-A."/>
        </authorList>
    </citation>
    <scope>GENE NAME</scope>
    <source>
        <strain>O44:K74</strain>
    </source>
</reference>
<reference key="5">
    <citation type="journal article" date="2002" name="J. Bacteriol.">
        <title>The fixA and fixB genes are necessary for anaerobic carnitine reduction in Escherichia coli.</title>
        <authorList>
            <person name="Walt A."/>
            <person name="Kahn M.L."/>
        </authorList>
    </citation>
    <scope>PROBABLE FUNCTION</scope>
    <source>
        <strain>K12 / BW25113</strain>
    </source>
</reference>
<organism>
    <name type="scientific">Escherichia coli (strain K12)</name>
    <dbReference type="NCBI Taxonomy" id="83333"/>
    <lineage>
        <taxon>Bacteria</taxon>
        <taxon>Pseudomonadati</taxon>
        <taxon>Pseudomonadota</taxon>
        <taxon>Gammaproteobacteria</taxon>
        <taxon>Enterobacterales</taxon>
        <taxon>Enterobacteriaceae</taxon>
        <taxon>Escherichia</taxon>
    </lineage>
</organism>
<keyword id="KW-0004">4Fe-4S</keyword>
<keyword id="KW-0249">Electron transport</keyword>
<keyword id="KW-0408">Iron</keyword>
<keyword id="KW-0411">Iron-sulfur</keyword>
<keyword id="KW-0479">Metal-binding</keyword>
<keyword id="KW-1185">Reference proteome</keyword>
<keyword id="KW-0813">Transport</keyword>
<comment type="function">
    <text>Could be part of an electron transfer system required for anaerobic carnitine reduction. Could be a 3Fe-4S cluster-containing protein.</text>
</comment>
<comment type="interaction">
    <interactant intactId="EBI-1113234">
        <id>P68646</id>
    </interactant>
    <interactant intactId="EBI-550843">
        <id>P07639</id>
        <label>aroB</label>
    </interactant>
    <organismsDiffer>false</organismsDiffer>
    <experiments>2</experiments>
</comment>
<comment type="interaction">
    <interactant intactId="EBI-1113234">
        <id>P68646</id>
    </interactant>
    <interactant intactId="EBI-546140">
        <id>P0ABH9</id>
        <label>clpA</label>
    </interactant>
    <organismsDiffer>false</organismsDiffer>
    <experiments>2</experiments>
</comment>
<comment type="interaction">
    <interactant intactId="EBI-1113234">
        <id>P68646</id>
    </interactant>
    <interactant intactId="EBI-543661">
        <id>P77806</id>
        <label>ybdL</label>
    </interactant>
    <organismsDiffer>false</organismsDiffer>
    <experiments>3</experiments>
</comment>
<comment type="similarity">
    <text evidence="1">Belongs to the bacterial-type ferredoxin family. FixX subfamily.</text>
</comment>